<feature type="chain" id="PRO_0000096365" description="Mediator of RNA polymerase II transcription subunit 17">
    <location>
        <begin position="1"/>
        <end position="545"/>
    </location>
</feature>
<feature type="region of interest" description="Disordered" evidence="1">
    <location>
        <begin position="148"/>
        <end position="168"/>
    </location>
</feature>
<feature type="compositionally biased region" description="Polar residues" evidence="1">
    <location>
        <begin position="149"/>
        <end position="162"/>
    </location>
</feature>
<feature type="helix" evidence="7">
    <location>
        <begin position="34"/>
        <end position="45"/>
    </location>
</feature>
<feature type="strand" evidence="7">
    <location>
        <begin position="46"/>
        <end position="48"/>
    </location>
</feature>
<feature type="helix" evidence="7">
    <location>
        <begin position="53"/>
        <end position="65"/>
    </location>
</feature>
<feature type="helix" evidence="6">
    <location>
        <begin position="101"/>
        <end position="130"/>
    </location>
</feature>
<feature type="turn" evidence="6">
    <location>
        <begin position="131"/>
        <end position="133"/>
    </location>
</feature>
<feature type="helix" evidence="6">
    <location>
        <begin position="136"/>
        <end position="140"/>
    </location>
</feature>
<feature type="helix" evidence="6">
    <location>
        <begin position="143"/>
        <end position="148"/>
    </location>
</feature>
<feature type="strand" evidence="6">
    <location>
        <begin position="154"/>
        <end position="158"/>
    </location>
</feature>
<feature type="helix" evidence="6">
    <location>
        <begin position="168"/>
        <end position="213"/>
    </location>
</feature>
<feature type="strand" evidence="6">
    <location>
        <begin position="218"/>
        <end position="220"/>
    </location>
</feature>
<feature type="turn" evidence="6">
    <location>
        <begin position="222"/>
        <end position="224"/>
    </location>
</feature>
<feature type="strand" evidence="6">
    <location>
        <begin position="226"/>
        <end position="229"/>
    </location>
</feature>
<feature type="strand" evidence="6">
    <location>
        <begin position="242"/>
        <end position="246"/>
    </location>
</feature>
<feature type="turn" evidence="6">
    <location>
        <begin position="248"/>
        <end position="250"/>
    </location>
</feature>
<feature type="strand" evidence="6">
    <location>
        <begin position="253"/>
        <end position="256"/>
    </location>
</feature>
<feature type="strand" evidence="6">
    <location>
        <begin position="265"/>
        <end position="271"/>
    </location>
</feature>
<feature type="strand" evidence="6">
    <location>
        <begin position="277"/>
        <end position="282"/>
    </location>
</feature>
<feature type="helix" evidence="6">
    <location>
        <begin position="293"/>
        <end position="320"/>
    </location>
</feature>
<feature type="helix" evidence="7">
    <location>
        <begin position="322"/>
        <end position="324"/>
    </location>
</feature>
<feature type="strand" evidence="6">
    <location>
        <begin position="330"/>
        <end position="336"/>
    </location>
</feature>
<feature type="turn" evidence="7">
    <location>
        <begin position="338"/>
        <end position="340"/>
    </location>
</feature>
<feature type="strand" evidence="6">
    <location>
        <begin position="342"/>
        <end position="348"/>
    </location>
</feature>
<feature type="helix" evidence="6">
    <location>
        <begin position="374"/>
        <end position="407"/>
    </location>
</feature>
<feature type="strand" evidence="7">
    <location>
        <begin position="419"/>
        <end position="421"/>
    </location>
</feature>
<feature type="helix" evidence="6">
    <location>
        <begin position="425"/>
        <end position="447"/>
    </location>
</feature>
<feature type="strand" evidence="6">
    <location>
        <begin position="451"/>
        <end position="457"/>
    </location>
</feature>
<feature type="helix" evidence="6">
    <location>
        <begin position="459"/>
        <end position="461"/>
    </location>
</feature>
<feature type="helix" evidence="6">
    <location>
        <begin position="466"/>
        <end position="472"/>
    </location>
</feature>
<feature type="strand" evidence="6">
    <location>
        <begin position="473"/>
        <end position="475"/>
    </location>
</feature>
<feature type="strand" evidence="6">
    <location>
        <begin position="479"/>
        <end position="486"/>
    </location>
</feature>
<feature type="strand" evidence="7">
    <location>
        <begin position="487"/>
        <end position="490"/>
    </location>
</feature>
<feature type="strand" evidence="6">
    <location>
        <begin position="493"/>
        <end position="497"/>
    </location>
</feature>
<feature type="strand" evidence="6">
    <location>
        <begin position="509"/>
        <end position="512"/>
    </location>
</feature>
<feature type="strand" evidence="6">
    <location>
        <begin position="517"/>
        <end position="522"/>
    </location>
</feature>
<feature type="helix" evidence="6">
    <location>
        <begin position="523"/>
        <end position="534"/>
    </location>
</feature>
<feature type="turn" evidence="7">
    <location>
        <begin position="535"/>
        <end position="537"/>
    </location>
</feature>
<dbReference type="EMBL" id="CU329671">
    <property type="protein sequence ID" value="CAB10081.1"/>
    <property type="molecule type" value="Genomic_DNA"/>
</dbReference>
<dbReference type="PIR" id="T40207">
    <property type="entry name" value="T40207"/>
</dbReference>
<dbReference type="RefSeq" id="NP_596566.1">
    <property type="nucleotide sequence ID" value="NM_001022487.2"/>
</dbReference>
<dbReference type="PDB" id="4H63">
    <property type="method" value="X-ray"/>
    <property type="resolution" value="3.40 A"/>
    <property type="chains" value="Q=78-545"/>
</dbReference>
<dbReference type="PDB" id="5N9J">
    <property type="method" value="X-ray"/>
    <property type="resolution" value="3.40 A"/>
    <property type="chains" value="W=1-545"/>
</dbReference>
<dbReference type="PDB" id="5U0P">
    <property type="method" value="EM"/>
    <property type="resolution" value="4.40 A"/>
    <property type="chains" value="Q=1-545"/>
</dbReference>
<dbReference type="PDB" id="5U0S">
    <property type="method" value="EM"/>
    <property type="resolution" value="7.80 A"/>
    <property type="chains" value="Q=1-545"/>
</dbReference>
<dbReference type="PDBsum" id="4H63"/>
<dbReference type="PDBsum" id="5N9J"/>
<dbReference type="PDBsum" id="5U0P"/>
<dbReference type="PDBsum" id="5U0S"/>
<dbReference type="EMDB" id="EMD-8479"/>
<dbReference type="EMDB" id="EMD-8480"/>
<dbReference type="SMR" id="P87306"/>
<dbReference type="BioGRID" id="276825">
    <property type="interactions" value="5"/>
</dbReference>
<dbReference type="DIP" id="DIP-38758N"/>
<dbReference type="FunCoup" id="P87306">
    <property type="interactions" value="53"/>
</dbReference>
<dbReference type="IntAct" id="P87306">
    <property type="interactions" value="8"/>
</dbReference>
<dbReference type="STRING" id="284812.P87306"/>
<dbReference type="iPTMnet" id="P87306"/>
<dbReference type="PaxDb" id="4896-SPBC31F10.04c.1"/>
<dbReference type="EnsemblFungi" id="SPBC31F10.04c.1">
    <property type="protein sequence ID" value="SPBC31F10.04c.1:pep"/>
    <property type="gene ID" value="SPBC31F10.04c"/>
</dbReference>
<dbReference type="GeneID" id="2540294"/>
<dbReference type="KEGG" id="spo:2540294"/>
<dbReference type="PomBase" id="SPBC31F10.04c"/>
<dbReference type="VEuPathDB" id="FungiDB:SPBC31F10.04c"/>
<dbReference type="eggNOG" id="ENOG502QS9H">
    <property type="taxonomic scope" value="Eukaryota"/>
</dbReference>
<dbReference type="HOGENOM" id="CLU_499822_0_0_1"/>
<dbReference type="InParanoid" id="P87306"/>
<dbReference type="OMA" id="EAQICEN"/>
<dbReference type="EvolutionaryTrace" id="P87306"/>
<dbReference type="PRO" id="PR:P87306"/>
<dbReference type="Proteomes" id="UP000002485">
    <property type="component" value="Chromosome II"/>
</dbReference>
<dbReference type="GO" id="GO:0070847">
    <property type="term" value="C:core mediator complex"/>
    <property type="evidence" value="ECO:0000318"/>
    <property type="project" value="GO_Central"/>
</dbReference>
<dbReference type="GO" id="GO:0016592">
    <property type="term" value="C:mediator complex"/>
    <property type="evidence" value="ECO:0000314"/>
    <property type="project" value="PomBase"/>
</dbReference>
<dbReference type="GO" id="GO:0003713">
    <property type="term" value="F:transcription coactivator activity"/>
    <property type="evidence" value="ECO:0000314"/>
    <property type="project" value="PomBase"/>
</dbReference>
<dbReference type="GO" id="GO:0003712">
    <property type="term" value="F:transcription coregulator activity"/>
    <property type="evidence" value="ECO:0000318"/>
    <property type="project" value="GO_Central"/>
</dbReference>
<dbReference type="GO" id="GO:0060261">
    <property type="term" value="P:positive regulation of transcription initiation by RNA polymerase II"/>
    <property type="evidence" value="ECO:0000269"/>
    <property type="project" value="PomBase"/>
</dbReference>
<dbReference type="GO" id="GO:0006357">
    <property type="term" value="P:regulation of transcription by RNA polymerase II"/>
    <property type="evidence" value="ECO:0000318"/>
    <property type="project" value="GO_Central"/>
</dbReference>
<dbReference type="GO" id="GO:0006367">
    <property type="term" value="P:transcription initiation at RNA polymerase II promoter"/>
    <property type="evidence" value="ECO:0000314"/>
    <property type="project" value="PomBase"/>
</dbReference>
<dbReference type="Gene3D" id="3.90.1150.120">
    <property type="match status" value="1"/>
</dbReference>
<dbReference type="Gene3D" id="6.10.250.2620">
    <property type="match status" value="1"/>
</dbReference>
<dbReference type="Gene3D" id="6.10.250.2630">
    <property type="match status" value="1"/>
</dbReference>
<dbReference type="InterPro" id="IPR019313">
    <property type="entry name" value="Mediator_Med17"/>
</dbReference>
<dbReference type="PANTHER" id="PTHR13114">
    <property type="entry name" value="MEDIATOR OF RNA POLYMERASE II TRANSCRIPTION SUBUNIT 17"/>
    <property type="match status" value="1"/>
</dbReference>
<dbReference type="PANTHER" id="PTHR13114:SF7">
    <property type="entry name" value="MEDIATOR OF RNA POLYMERASE II TRANSCRIPTION SUBUNIT 17"/>
    <property type="match status" value="1"/>
</dbReference>
<dbReference type="Pfam" id="PF10156">
    <property type="entry name" value="Med17"/>
    <property type="match status" value="1"/>
</dbReference>
<gene>
    <name type="primary">med17</name>
    <name type="synonym">srb4</name>
    <name type="ORF">SPBC31F10.04c</name>
</gene>
<name>MED17_SCHPO</name>
<organism>
    <name type="scientific">Schizosaccharomyces pombe (strain 972 / ATCC 24843)</name>
    <name type="common">Fission yeast</name>
    <dbReference type="NCBI Taxonomy" id="284812"/>
    <lineage>
        <taxon>Eukaryota</taxon>
        <taxon>Fungi</taxon>
        <taxon>Dikarya</taxon>
        <taxon>Ascomycota</taxon>
        <taxon>Taphrinomycotina</taxon>
        <taxon>Schizosaccharomycetes</taxon>
        <taxon>Schizosaccharomycetales</taxon>
        <taxon>Schizosaccharomycetaceae</taxon>
        <taxon>Schizosaccharomyces</taxon>
    </lineage>
</organism>
<accession>P87306</accession>
<protein>
    <recommendedName>
        <fullName>Mediator of RNA polymerase II transcription subunit 17</fullName>
    </recommendedName>
    <alternativeName>
        <fullName>Mediator complex subunit 17</fullName>
    </alternativeName>
    <alternativeName>
        <fullName>Suppressor of RNA polymerase B 4 homolog</fullName>
    </alternativeName>
</protein>
<sequence length="545" mass="62480">MAEEANKDADISSLSLSLDPEIIGGQNNFLENNLQQIFQKIIQERGPFRDLKEEDLQKELQKESIKDESSAKSSETENVLEFATLDSKRNVNDTEVESMDSQAYKKELIEQIMIAQTECSLALDMTSLLLSKFKENSIETISPFLKSTVPPSSLQFSRSQPPESKESDATLAKCWKEKSLTSSCKFLFEAKERLTSVVETEHEYYTELVKVKEASWPLFNSQGSNHLSVQYSCLGGISLGLGLIRMKPESKSFEVQSSLLYSQAALKISILNKDRDEIGSSTWSWPSQNCNSVLLKDIYKLQEILFEMDIWNSLLQEAQSCGNQGVNFTGDEILVPISDDHVVRITLETSSKNTESGFTEDKKSNEDTSTNFVTIKQEKELLKCLCDTLNAIAHILFLKHCRKSDRRSQQPELYMAIDANAPLILRPLIFYYNLNQESLEFQRWLKQRDISFKFMPNYPWEKAKDFLELENSLSINRLSISWRIMVSNFEPAIFIQHTPTLHGTDKSVWRCKDQYSSNQFSSLKNVCQYIEHHINSLSRRSKKTE</sequence>
<evidence type="ECO:0000256" key="1">
    <source>
        <dbReference type="SAM" id="MobiDB-lite"/>
    </source>
</evidence>
<evidence type="ECO:0000269" key="2">
    <source>
    </source>
</evidence>
<evidence type="ECO:0000269" key="3">
    <source>
    </source>
</evidence>
<evidence type="ECO:0000269" key="4">
    <source>
    </source>
</evidence>
<evidence type="ECO:0000305" key="5"/>
<evidence type="ECO:0007829" key="6">
    <source>
        <dbReference type="PDB" id="4H63"/>
    </source>
</evidence>
<evidence type="ECO:0007829" key="7">
    <source>
        <dbReference type="PDB" id="5N9J"/>
    </source>
</evidence>
<keyword id="KW-0002">3D-structure</keyword>
<keyword id="KW-0010">Activator</keyword>
<keyword id="KW-0539">Nucleus</keyword>
<keyword id="KW-1185">Reference proteome</keyword>
<keyword id="KW-0804">Transcription</keyword>
<keyword id="KW-0805">Transcription regulation</keyword>
<reference key="1">
    <citation type="journal article" date="2002" name="Nature">
        <title>The genome sequence of Schizosaccharomyces pombe.</title>
        <authorList>
            <person name="Wood V."/>
            <person name="Gwilliam R."/>
            <person name="Rajandream M.A."/>
            <person name="Lyne M.H."/>
            <person name="Lyne R."/>
            <person name="Stewart A."/>
            <person name="Sgouros J.G."/>
            <person name="Peat N."/>
            <person name="Hayles J."/>
            <person name="Baker S.G."/>
            <person name="Basham D."/>
            <person name="Bowman S."/>
            <person name="Brooks K."/>
            <person name="Brown D."/>
            <person name="Brown S."/>
            <person name="Chillingworth T."/>
            <person name="Churcher C.M."/>
            <person name="Collins M."/>
            <person name="Connor R."/>
            <person name="Cronin A."/>
            <person name="Davis P."/>
            <person name="Feltwell T."/>
            <person name="Fraser A."/>
            <person name="Gentles S."/>
            <person name="Goble A."/>
            <person name="Hamlin N."/>
            <person name="Harris D.E."/>
            <person name="Hidalgo J."/>
            <person name="Hodgson G."/>
            <person name="Holroyd S."/>
            <person name="Hornsby T."/>
            <person name="Howarth S."/>
            <person name="Huckle E.J."/>
            <person name="Hunt S."/>
            <person name="Jagels K."/>
            <person name="James K.D."/>
            <person name="Jones L."/>
            <person name="Jones M."/>
            <person name="Leather S."/>
            <person name="McDonald S."/>
            <person name="McLean J."/>
            <person name="Mooney P."/>
            <person name="Moule S."/>
            <person name="Mungall K.L."/>
            <person name="Murphy L.D."/>
            <person name="Niblett D."/>
            <person name="Odell C."/>
            <person name="Oliver K."/>
            <person name="O'Neil S."/>
            <person name="Pearson D."/>
            <person name="Quail M.A."/>
            <person name="Rabbinowitsch E."/>
            <person name="Rutherford K.M."/>
            <person name="Rutter S."/>
            <person name="Saunders D."/>
            <person name="Seeger K."/>
            <person name="Sharp S."/>
            <person name="Skelton J."/>
            <person name="Simmonds M.N."/>
            <person name="Squares R."/>
            <person name="Squares S."/>
            <person name="Stevens K."/>
            <person name="Taylor K."/>
            <person name="Taylor R.G."/>
            <person name="Tivey A."/>
            <person name="Walsh S.V."/>
            <person name="Warren T."/>
            <person name="Whitehead S."/>
            <person name="Woodward J.R."/>
            <person name="Volckaert G."/>
            <person name="Aert R."/>
            <person name="Robben J."/>
            <person name="Grymonprez B."/>
            <person name="Weltjens I."/>
            <person name="Vanstreels E."/>
            <person name="Rieger M."/>
            <person name="Schaefer M."/>
            <person name="Mueller-Auer S."/>
            <person name="Gabel C."/>
            <person name="Fuchs M."/>
            <person name="Duesterhoeft A."/>
            <person name="Fritzc C."/>
            <person name="Holzer E."/>
            <person name="Moestl D."/>
            <person name="Hilbert H."/>
            <person name="Borzym K."/>
            <person name="Langer I."/>
            <person name="Beck A."/>
            <person name="Lehrach H."/>
            <person name="Reinhardt R."/>
            <person name="Pohl T.M."/>
            <person name="Eger P."/>
            <person name="Zimmermann W."/>
            <person name="Wedler H."/>
            <person name="Wambutt R."/>
            <person name="Purnelle B."/>
            <person name="Goffeau A."/>
            <person name="Cadieu E."/>
            <person name="Dreano S."/>
            <person name="Gloux S."/>
            <person name="Lelaure V."/>
            <person name="Mottier S."/>
            <person name="Galibert F."/>
            <person name="Aves S.J."/>
            <person name="Xiang Z."/>
            <person name="Hunt C."/>
            <person name="Moore K."/>
            <person name="Hurst S.M."/>
            <person name="Lucas M."/>
            <person name="Rochet M."/>
            <person name="Gaillardin C."/>
            <person name="Tallada V.A."/>
            <person name="Garzon A."/>
            <person name="Thode G."/>
            <person name="Daga R.R."/>
            <person name="Cruzado L."/>
            <person name="Jimenez J."/>
            <person name="Sanchez M."/>
            <person name="del Rey F."/>
            <person name="Benito J."/>
            <person name="Dominguez A."/>
            <person name="Revuelta J.L."/>
            <person name="Moreno S."/>
            <person name="Armstrong J."/>
            <person name="Forsburg S.L."/>
            <person name="Cerutti L."/>
            <person name="Lowe T."/>
            <person name="McCombie W.R."/>
            <person name="Paulsen I."/>
            <person name="Potashkin J."/>
            <person name="Shpakovski G.V."/>
            <person name="Ussery D."/>
            <person name="Barrell B.G."/>
            <person name="Nurse P."/>
        </authorList>
    </citation>
    <scope>NUCLEOTIDE SEQUENCE [LARGE SCALE GENOMIC DNA]</scope>
    <source>
        <strain>972 / ATCC 24843</strain>
    </source>
</reference>
<reference key="2">
    <citation type="journal article" date="2000" name="J. Biol. Chem.">
        <title>Purification and characterization of RNA polymerase II holoenzyme from Schizosaccharomyces pombe.</title>
        <authorList>
            <person name="Spaehr H."/>
            <person name="Beve J."/>
            <person name="Larsson T."/>
            <person name="Bergstroem J."/>
            <person name="Karlsson K.-A."/>
            <person name="Gustafsson C.M."/>
        </authorList>
    </citation>
    <scope>IDENTIFICATION BY MASS SPECTROMETRY</scope>
    <scope>IDENTIFICATION IN THE MEDIATOR COMPLEX</scope>
    <source>
        <strain>972 / ATCC 24843</strain>
    </source>
</reference>
<reference key="3">
    <citation type="journal article" date="2006" name="Mol. Cell">
        <title>Genome-wide occupancy profile of mediator and the Srb8-11 module reveals interactions with coding regions.</title>
        <authorList>
            <person name="Zhu X."/>
            <person name="Wiren M."/>
            <person name="Sinha I."/>
            <person name="Rasmussen N.N."/>
            <person name="Linder T."/>
            <person name="Holmberg S."/>
            <person name="Ekwall K."/>
            <person name="Gustafsson C.M."/>
        </authorList>
    </citation>
    <scope>FUNCTION</scope>
</reference>
<reference key="4">
    <citation type="journal article" date="2006" name="Proc. Natl. Acad. Sci. U.S.A.">
        <title>The cyclin-dependent kinase 8 module sterically blocks Mediator interactions with RNA polymerase II.</title>
        <authorList>
            <person name="Elmlund H."/>
            <person name="Baraznenok V."/>
            <person name="Lindahl M."/>
            <person name="Samuelsen C.O."/>
            <person name="Koeck P.J.B."/>
            <person name="Holmberg S."/>
            <person name="Hebert H."/>
            <person name="Gustafsson C.M."/>
        </authorList>
    </citation>
    <scope>INTERACTION WITH MED18; PRK1 AND RBP1</scope>
</reference>
<proteinExistence type="evidence at protein level"/>
<comment type="function">
    <text evidence="3">Component of the Mediator complex, a coactivator involved in the regulated transcription of nearly all RNA polymerase II-dependent genes. Mediator functions as a bridge to convey information from gene-specific regulatory proteins to the basal RNA polymerase II transcription machinery. Mediator is recruited to promoters by direct interactions with regulatory proteins and serves as a scaffold for the assembly of a functional preinitiation complex with RNA polymerase II and the general transcription factors.</text>
</comment>
<comment type="subunit">
    <text evidence="2 4">Component of the Mediator complex. Interacts with med18, prk1 and rbp1.</text>
</comment>
<comment type="subcellular location">
    <subcellularLocation>
        <location evidence="5">Nucleus</location>
    </subcellularLocation>
</comment>
<comment type="similarity">
    <text evidence="5">Belongs to the Mediator complex subunit 17 family.</text>
</comment>